<name>VAM7B_DICDI</name>
<proteinExistence type="inferred from homology"/>
<organism>
    <name type="scientific">Dictyostelium discoideum</name>
    <name type="common">Social amoeba</name>
    <dbReference type="NCBI Taxonomy" id="44689"/>
    <lineage>
        <taxon>Eukaryota</taxon>
        <taxon>Amoebozoa</taxon>
        <taxon>Evosea</taxon>
        <taxon>Eumycetozoa</taxon>
        <taxon>Dictyostelia</taxon>
        <taxon>Dictyosteliales</taxon>
        <taxon>Dictyosteliaceae</taxon>
        <taxon>Dictyostelium</taxon>
    </lineage>
</organism>
<protein>
    <recommendedName>
        <fullName>Vesicle-associated membrane protein 7B</fullName>
    </recommendedName>
</protein>
<sequence length="260" mass="29561">MPIIYSLVARGSSVLAEFTSTNGNFVTITRRILDLIPPNDTKMSYVYEKYIFHYLVSDTLTYLCMADEEFGRRIPFTFLDDVKNRFKSMYGDKGKTAIAYGMNSDFSRTLENLMDHYSNTTRVDTMSRTMAEIDEVKNILVSDIAPQLLKRGEKIEMLVERTDTLNQQSFKFKKQSKQLKCAMWWKNVKLMLVLGAIVLIIIFIIVMSYCDGFRSGSKCRSSPSSNSTPTPTPTETPTPTPTPTSTPTPSQLLETLLNQF</sequence>
<gene>
    <name evidence="9" type="primary">vamp7B</name>
    <name type="ORF">DDB_G0277173</name>
</gene>
<keyword id="KW-0175">Coiled coil</keyword>
<keyword id="KW-0968">Cytoplasmic vesicle</keyword>
<keyword id="KW-0256">Endoplasmic reticulum</keyword>
<keyword id="KW-0967">Endosome</keyword>
<keyword id="KW-0333">Golgi apparatus</keyword>
<keyword id="KW-0458">Lysosome</keyword>
<keyword id="KW-0472">Membrane</keyword>
<keyword id="KW-0653">Protein transport</keyword>
<keyword id="KW-1185">Reference proteome</keyword>
<keyword id="KW-0735">Signal-anchor</keyword>
<keyword id="KW-0812">Transmembrane</keyword>
<keyword id="KW-1133">Transmembrane helix</keyword>
<keyword id="KW-0813">Transport</keyword>
<comment type="function">
    <text evidence="2">Involved in the targeting and/or fusion of transport vesicles to their target membrane during transport of proteins from the early endosome to the lysosome. Required for heterotypic fusion of late endosomes with lysosomes and homotypic lysosomal fusion (By similarity).</text>
</comment>
<comment type="subcellular location">
    <subcellularLocation>
        <location evidence="1 2 3 4">Cytoplasmic vesicle</location>
        <location evidence="1 2 3 4">Secretory vesicle membrane</location>
        <topology evidence="1 2 3 4">Single-pass type IV membrane protein</topology>
    </subcellularLocation>
    <subcellularLocation>
        <location evidence="1 2 3 4">Golgi apparatus</location>
        <location evidence="1 2 3 4">trans-Golgi network membrane</location>
        <topology evidence="1 2 3 4">Single-pass type IV membrane protein</topology>
    </subcellularLocation>
    <subcellularLocation>
        <location>Late endosome membrane</location>
        <topology>Single-pass type IV membrane protein</topology>
    </subcellularLocation>
    <subcellularLocation>
        <location evidence="1 2 3 4">Lysosome membrane</location>
        <topology evidence="1 2 3 4">Single-pass type IV membrane protein</topology>
    </subcellularLocation>
    <subcellularLocation>
        <location evidence="1 2 3 4">Endoplasmic reticulum membrane</location>
        <topology evidence="1 2 3 4">Single-pass type IV membrane protein</topology>
    </subcellularLocation>
    <subcellularLocation>
        <location evidence="1 2 3 4">Cytoplasmic vesicle</location>
        <location evidence="1 2 3 4">Phagosome membrane</location>
        <topology evidence="1 2 3 4">Single-pass type IV membrane protein</topology>
    </subcellularLocation>
    <text evidence="1 2 3 4">During macropinocytosis highest levels are found in endosomes with lower levels observed in the lysosomes.</text>
</comment>
<comment type="similarity">
    <text evidence="8">Belongs to the synaptobrevin family.</text>
</comment>
<evidence type="ECO:0000250" key="1">
    <source>
        <dbReference type="UniProtKB" id="P70280"/>
    </source>
</evidence>
<evidence type="ECO:0000250" key="2">
    <source>
        <dbReference type="UniProtKB" id="Q54NW7"/>
    </source>
</evidence>
<evidence type="ECO:0000250" key="3">
    <source>
        <dbReference type="UniProtKB" id="Q9JHW5"/>
    </source>
</evidence>
<evidence type="ECO:0000255" key="4"/>
<evidence type="ECO:0000255" key="5">
    <source>
        <dbReference type="PROSITE-ProRule" id="PRU00231"/>
    </source>
</evidence>
<evidence type="ECO:0000255" key="6">
    <source>
        <dbReference type="PROSITE-ProRule" id="PRU00290"/>
    </source>
</evidence>
<evidence type="ECO:0000256" key="7">
    <source>
        <dbReference type="SAM" id="MobiDB-lite"/>
    </source>
</evidence>
<evidence type="ECO:0000305" key="8"/>
<evidence type="ECO:0000312" key="9">
    <source>
        <dbReference type="EMBL" id="EAL68772.1"/>
    </source>
</evidence>
<reference key="1">
    <citation type="journal article" date="2002" name="Nature">
        <title>Sequence and analysis of chromosome 2 of Dictyostelium discoideum.</title>
        <authorList>
            <person name="Gloeckner G."/>
            <person name="Eichinger L."/>
            <person name="Szafranski K."/>
            <person name="Pachebat J.A."/>
            <person name="Bankier A.T."/>
            <person name="Dear P.H."/>
            <person name="Lehmann R."/>
            <person name="Baumgart C."/>
            <person name="Parra G."/>
            <person name="Abril J.F."/>
            <person name="Guigo R."/>
            <person name="Kumpf K."/>
            <person name="Tunggal B."/>
            <person name="Cox E.C."/>
            <person name="Quail M.A."/>
            <person name="Platzer M."/>
            <person name="Rosenthal A."/>
            <person name="Noegel A.A."/>
        </authorList>
    </citation>
    <scope>NUCLEOTIDE SEQUENCE [LARGE SCALE GENOMIC DNA]</scope>
    <source>
        <strain>AX4</strain>
    </source>
</reference>
<reference evidence="9" key="2">
    <citation type="journal article" date="2005" name="Nature">
        <title>The genome of the social amoeba Dictyostelium discoideum.</title>
        <authorList>
            <person name="Eichinger L."/>
            <person name="Pachebat J.A."/>
            <person name="Gloeckner G."/>
            <person name="Rajandream M.A."/>
            <person name="Sucgang R."/>
            <person name="Berriman M."/>
            <person name="Song J."/>
            <person name="Olsen R."/>
            <person name="Szafranski K."/>
            <person name="Xu Q."/>
            <person name="Tunggal B."/>
            <person name="Kummerfeld S."/>
            <person name="Madera M."/>
            <person name="Konfortov B.A."/>
            <person name="Rivero F."/>
            <person name="Bankier A.T."/>
            <person name="Lehmann R."/>
            <person name="Hamlin N."/>
            <person name="Davies R."/>
            <person name="Gaudet P."/>
            <person name="Fey P."/>
            <person name="Pilcher K."/>
            <person name="Chen G."/>
            <person name="Saunders D."/>
            <person name="Sodergren E.J."/>
            <person name="Davis P."/>
            <person name="Kerhornou A."/>
            <person name="Nie X."/>
            <person name="Hall N."/>
            <person name="Anjard C."/>
            <person name="Hemphill L."/>
            <person name="Bason N."/>
            <person name="Farbrother P."/>
            <person name="Desany B."/>
            <person name="Just E."/>
            <person name="Morio T."/>
            <person name="Rost R."/>
            <person name="Churcher C.M."/>
            <person name="Cooper J."/>
            <person name="Haydock S."/>
            <person name="van Driessche N."/>
            <person name="Cronin A."/>
            <person name="Goodhead I."/>
            <person name="Muzny D.M."/>
            <person name="Mourier T."/>
            <person name="Pain A."/>
            <person name="Lu M."/>
            <person name="Harper D."/>
            <person name="Lindsay R."/>
            <person name="Hauser H."/>
            <person name="James K.D."/>
            <person name="Quiles M."/>
            <person name="Madan Babu M."/>
            <person name="Saito T."/>
            <person name="Buchrieser C."/>
            <person name="Wardroper A."/>
            <person name="Felder M."/>
            <person name="Thangavelu M."/>
            <person name="Johnson D."/>
            <person name="Knights A."/>
            <person name="Loulseged H."/>
            <person name="Mungall K.L."/>
            <person name="Oliver K."/>
            <person name="Price C."/>
            <person name="Quail M.A."/>
            <person name="Urushihara H."/>
            <person name="Hernandez J."/>
            <person name="Rabbinowitsch E."/>
            <person name="Steffen D."/>
            <person name="Sanders M."/>
            <person name="Ma J."/>
            <person name="Kohara Y."/>
            <person name="Sharp S."/>
            <person name="Simmonds M.N."/>
            <person name="Spiegler S."/>
            <person name="Tivey A."/>
            <person name="Sugano S."/>
            <person name="White B."/>
            <person name="Walker D."/>
            <person name="Woodward J.R."/>
            <person name="Winckler T."/>
            <person name="Tanaka Y."/>
            <person name="Shaulsky G."/>
            <person name="Schleicher M."/>
            <person name="Weinstock G.M."/>
            <person name="Rosenthal A."/>
            <person name="Cox E.C."/>
            <person name="Chisholm R.L."/>
            <person name="Gibbs R.A."/>
            <person name="Loomis W.F."/>
            <person name="Platzer M."/>
            <person name="Kay R.R."/>
            <person name="Williams J.G."/>
            <person name="Dear P.H."/>
            <person name="Noegel A.A."/>
            <person name="Barrell B.G."/>
            <person name="Kuspa A."/>
        </authorList>
    </citation>
    <scope>NUCLEOTIDE SEQUENCE [LARGE SCALE GENOMIC DNA]</scope>
    <source>
        <strain evidence="9">AX4</strain>
    </source>
</reference>
<feature type="chain" id="PRO_0000320002" description="Vesicle-associated membrane protein 7B">
    <location>
        <begin position="1"/>
        <end position="260"/>
    </location>
</feature>
<feature type="topological domain" description="Cytoplasmic" evidence="3 4">
    <location>
        <begin position="1"/>
        <end position="189"/>
    </location>
</feature>
<feature type="transmembrane region" description="Helical; Anchor for type IV membrane protein">
    <location>
        <begin position="190"/>
        <end position="210"/>
    </location>
</feature>
<feature type="topological domain" description="Vesicular" evidence="3 4">
    <location>
        <begin position="211"/>
        <end position="260"/>
    </location>
</feature>
<feature type="domain" description="Longin" evidence="5">
    <location>
        <begin position="7"/>
        <end position="110"/>
    </location>
</feature>
<feature type="domain" description="v-SNARE coiled-coil homology" evidence="6">
    <location>
        <begin position="125"/>
        <end position="186"/>
    </location>
</feature>
<feature type="region of interest" description="Disordered" evidence="7">
    <location>
        <begin position="215"/>
        <end position="250"/>
    </location>
</feature>
<feature type="compositionally biased region" description="Pro residues" evidence="7">
    <location>
        <begin position="230"/>
        <end position="246"/>
    </location>
</feature>
<dbReference type="EMBL" id="AAFI02000019">
    <property type="protein sequence ID" value="EAL68772.1"/>
    <property type="molecule type" value="Genomic_DNA"/>
</dbReference>
<dbReference type="RefSeq" id="XP_642704.1">
    <property type="nucleotide sequence ID" value="XM_637612.1"/>
</dbReference>
<dbReference type="SMR" id="Q86AQ7"/>
<dbReference type="FunCoup" id="Q86AQ7">
    <property type="interactions" value="485"/>
</dbReference>
<dbReference type="STRING" id="44689.Q86AQ7"/>
<dbReference type="GlyGen" id="Q86AQ7">
    <property type="glycosylation" value="6 sites"/>
</dbReference>
<dbReference type="PaxDb" id="44689-DDB0231542"/>
<dbReference type="EnsemblProtists" id="EAL68772">
    <property type="protein sequence ID" value="EAL68772"/>
    <property type="gene ID" value="DDB_G0277173"/>
</dbReference>
<dbReference type="GeneID" id="8620895"/>
<dbReference type="KEGG" id="ddi:DDB_G0277173"/>
<dbReference type="dictyBase" id="DDB_G0277173">
    <property type="gene designation" value="vamp7B"/>
</dbReference>
<dbReference type="VEuPathDB" id="AmoebaDB:DDB_G0277173"/>
<dbReference type="eggNOG" id="KOG0859">
    <property type="taxonomic scope" value="Eukaryota"/>
</dbReference>
<dbReference type="HOGENOM" id="CLU_064620_1_1_1"/>
<dbReference type="InParanoid" id="Q86AQ7"/>
<dbReference type="OMA" id="NTKLMIM"/>
<dbReference type="PhylomeDB" id="Q86AQ7"/>
<dbReference type="Reactome" id="R-DDI-199992">
    <property type="pathway name" value="trans-Golgi Network Vesicle Budding"/>
</dbReference>
<dbReference type="PRO" id="PR:Q86AQ7"/>
<dbReference type="Proteomes" id="UP000002195">
    <property type="component" value="Chromosome 2"/>
</dbReference>
<dbReference type="GO" id="GO:0000331">
    <property type="term" value="C:contractile vacuole"/>
    <property type="evidence" value="ECO:0000314"/>
    <property type="project" value="dictyBase"/>
</dbReference>
<dbReference type="GO" id="GO:0005789">
    <property type="term" value="C:endoplasmic reticulum membrane"/>
    <property type="evidence" value="ECO:0000250"/>
    <property type="project" value="UniProtKB"/>
</dbReference>
<dbReference type="GO" id="GO:0005768">
    <property type="term" value="C:endosome"/>
    <property type="evidence" value="ECO:0000314"/>
    <property type="project" value="dictyBase"/>
</dbReference>
<dbReference type="GO" id="GO:0005794">
    <property type="term" value="C:Golgi apparatus"/>
    <property type="evidence" value="ECO:0007669"/>
    <property type="project" value="UniProtKB-SubCell"/>
</dbReference>
<dbReference type="GO" id="GO:0031902">
    <property type="term" value="C:late endosome membrane"/>
    <property type="evidence" value="ECO:0000250"/>
    <property type="project" value="UniProtKB"/>
</dbReference>
<dbReference type="GO" id="GO:0005765">
    <property type="term" value="C:lysosomal membrane"/>
    <property type="evidence" value="ECO:0000250"/>
    <property type="project" value="UniProtKB"/>
</dbReference>
<dbReference type="GO" id="GO:0140220">
    <property type="term" value="C:pathogen-containing vacuole"/>
    <property type="evidence" value="ECO:0007005"/>
    <property type="project" value="dictyBase"/>
</dbReference>
<dbReference type="GO" id="GO:0030670">
    <property type="term" value="C:phagocytic vesicle membrane"/>
    <property type="evidence" value="ECO:0007669"/>
    <property type="project" value="UniProtKB-SubCell"/>
</dbReference>
<dbReference type="GO" id="GO:0031201">
    <property type="term" value="C:SNARE complex"/>
    <property type="evidence" value="ECO:0000250"/>
    <property type="project" value="UniProtKB"/>
</dbReference>
<dbReference type="GO" id="GO:0030658">
    <property type="term" value="C:transport vesicle membrane"/>
    <property type="evidence" value="ECO:0007669"/>
    <property type="project" value="UniProtKB-SubCell"/>
</dbReference>
<dbReference type="GO" id="GO:0008333">
    <property type="term" value="P:endosome to lysosome transport"/>
    <property type="evidence" value="ECO:0000250"/>
    <property type="project" value="UniProtKB"/>
</dbReference>
<dbReference type="GO" id="GO:0015031">
    <property type="term" value="P:protein transport"/>
    <property type="evidence" value="ECO:0007669"/>
    <property type="project" value="UniProtKB-KW"/>
</dbReference>
<dbReference type="GO" id="GO:0006906">
    <property type="term" value="P:vesicle fusion"/>
    <property type="evidence" value="ECO:0000250"/>
    <property type="project" value="UniProtKB"/>
</dbReference>
<dbReference type="CDD" id="cd14824">
    <property type="entry name" value="Longin"/>
    <property type="match status" value="1"/>
</dbReference>
<dbReference type="CDD" id="cd15843">
    <property type="entry name" value="R-SNARE"/>
    <property type="match status" value="1"/>
</dbReference>
<dbReference type="FunFam" id="1.20.5.110:FF:000004">
    <property type="entry name" value="Vesicle-associated membrane protein 7"/>
    <property type="match status" value="1"/>
</dbReference>
<dbReference type="FunFam" id="3.30.450.50:FF:000011">
    <property type="entry name" value="Vesicle-associated membrane protein 714"/>
    <property type="match status" value="1"/>
</dbReference>
<dbReference type="Gene3D" id="1.20.5.110">
    <property type="match status" value="1"/>
</dbReference>
<dbReference type="Gene3D" id="3.30.450.50">
    <property type="entry name" value="Longin domain"/>
    <property type="match status" value="1"/>
</dbReference>
<dbReference type="InterPro" id="IPR011012">
    <property type="entry name" value="Longin-like_dom_sf"/>
</dbReference>
<dbReference type="InterPro" id="IPR010908">
    <property type="entry name" value="Longin_dom"/>
</dbReference>
<dbReference type="InterPro" id="IPR001388">
    <property type="entry name" value="Synaptobrevin-like"/>
</dbReference>
<dbReference type="InterPro" id="IPR051097">
    <property type="entry name" value="Synaptobrevin-like_transport"/>
</dbReference>
<dbReference type="InterPro" id="IPR042855">
    <property type="entry name" value="V_SNARE_CC"/>
</dbReference>
<dbReference type="PANTHER" id="PTHR21136">
    <property type="entry name" value="SNARE PROTEINS"/>
    <property type="match status" value="1"/>
</dbReference>
<dbReference type="PANTHER" id="PTHR21136:SF168">
    <property type="entry name" value="VESICLE-ASSOCIATED MEMBRANE PROTEIN 9"/>
    <property type="match status" value="1"/>
</dbReference>
<dbReference type="Pfam" id="PF13774">
    <property type="entry name" value="Longin"/>
    <property type="match status" value="1"/>
</dbReference>
<dbReference type="Pfam" id="PF00957">
    <property type="entry name" value="Synaptobrevin"/>
    <property type="match status" value="1"/>
</dbReference>
<dbReference type="PRINTS" id="PR00219">
    <property type="entry name" value="SYNAPTOBREVN"/>
</dbReference>
<dbReference type="SMART" id="SM01270">
    <property type="entry name" value="Longin"/>
    <property type="match status" value="1"/>
</dbReference>
<dbReference type="SUPFAM" id="SSF58038">
    <property type="entry name" value="SNARE fusion complex"/>
    <property type="match status" value="1"/>
</dbReference>
<dbReference type="SUPFAM" id="SSF64356">
    <property type="entry name" value="SNARE-like"/>
    <property type="match status" value="1"/>
</dbReference>
<dbReference type="PROSITE" id="PS50859">
    <property type="entry name" value="LONGIN"/>
    <property type="match status" value="1"/>
</dbReference>
<dbReference type="PROSITE" id="PS50892">
    <property type="entry name" value="V_SNARE"/>
    <property type="match status" value="1"/>
</dbReference>
<accession>Q86AQ7</accession>
<accession>Q550B2</accession>